<gene>
    <name evidence="1" type="primary">trpD</name>
    <name type="ordered locus">Mflv_2957</name>
</gene>
<protein>
    <recommendedName>
        <fullName evidence="1">Anthranilate phosphoribosyltransferase</fullName>
        <ecNumber evidence="1">2.4.2.18</ecNumber>
    </recommendedName>
</protein>
<evidence type="ECO:0000255" key="1">
    <source>
        <dbReference type="HAMAP-Rule" id="MF_00211"/>
    </source>
</evidence>
<feature type="chain" id="PRO_1000078018" description="Anthranilate phosphoribosyltransferase">
    <location>
        <begin position="1"/>
        <end position="364"/>
    </location>
</feature>
<feature type="binding site" evidence="1">
    <location>
        <position position="101"/>
    </location>
    <ligand>
        <name>5-phospho-alpha-D-ribose 1-diphosphate</name>
        <dbReference type="ChEBI" id="CHEBI:58017"/>
    </ligand>
</feature>
<feature type="binding site" evidence="1">
    <location>
        <position position="101"/>
    </location>
    <ligand>
        <name>anthranilate</name>
        <dbReference type="ChEBI" id="CHEBI:16567"/>
        <label>1</label>
    </ligand>
</feature>
<feature type="binding site" evidence="1">
    <location>
        <begin position="104"/>
        <end position="105"/>
    </location>
    <ligand>
        <name>5-phospho-alpha-D-ribose 1-diphosphate</name>
        <dbReference type="ChEBI" id="CHEBI:58017"/>
    </ligand>
</feature>
<feature type="binding site" evidence="1">
    <location>
        <position position="109"/>
    </location>
    <ligand>
        <name>5-phospho-alpha-D-ribose 1-diphosphate</name>
        <dbReference type="ChEBI" id="CHEBI:58017"/>
    </ligand>
</feature>
<feature type="binding site" evidence="1">
    <location>
        <begin position="111"/>
        <end position="114"/>
    </location>
    <ligand>
        <name>5-phospho-alpha-D-ribose 1-diphosphate</name>
        <dbReference type="ChEBI" id="CHEBI:58017"/>
    </ligand>
</feature>
<feature type="binding site" evidence="1">
    <location>
        <position position="113"/>
    </location>
    <ligand>
        <name>Mg(2+)</name>
        <dbReference type="ChEBI" id="CHEBI:18420"/>
        <label>1</label>
    </ligand>
</feature>
<feature type="binding site" evidence="1">
    <location>
        <begin position="129"/>
        <end position="137"/>
    </location>
    <ligand>
        <name>5-phospho-alpha-D-ribose 1-diphosphate</name>
        <dbReference type="ChEBI" id="CHEBI:58017"/>
    </ligand>
</feature>
<feature type="binding site" evidence="1">
    <location>
        <position position="132"/>
    </location>
    <ligand>
        <name>anthranilate</name>
        <dbReference type="ChEBI" id="CHEBI:16567"/>
        <label>1</label>
    </ligand>
</feature>
<feature type="binding site" evidence="1">
    <location>
        <position position="141"/>
    </location>
    <ligand>
        <name>5-phospho-alpha-D-ribose 1-diphosphate</name>
        <dbReference type="ChEBI" id="CHEBI:58017"/>
    </ligand>
</feature>
<feature type="binding site" evidence="1">
    <location>
        <position position="187"/>
    </location>
    <ligand>
        <name>anthranilate</name>
        <dbReference type="ChEBI" id="CHEBI:16567"/>
        <label>2</label>
    </ligand>
</feature>
<feature type="binding site" evidence="1">
    <location>
        <position position="245"/>
    </location>
    <ligand>
        <name>Mg(2+)</name>
        <dbReference type="ChEBI" id="CHEBI:18420"/>
        <label>2</label>
    </ligand>
</feature>
<feature type="binding site" evidence="1">
    <location>
        <position position="246"/>
    </location>
    <ligand>
        <name>Mg(2+)</name>
        <dbReference type="ChEBI" id="CHEBI:18420"/>
        <label>1</label>
    </ligand>
</feature>
<feature type="binding site" evidence="1">
    <location>
        <position position="246"/>
    </location>
    <ligand>
        <name>Mg(2+)</name>
        <dbReference type="ChEBI" id="CHEBI:18420"/>
        <label>2</label>
    </ligand>
</feature>
<accession>A4TBH5</accession>
<sequence>MTTPPPRPAAPTTDPGDTPTWAMILGRLTTGQSLLPGQTAWAMDQIMTGVATPAQIAAFAVSMKMKRPTSAEVTELAEIMLKHALPVPTDTIGTHTVDIVGTGGDGANTVNLSTMASIVVAAAGVPVVKHGNRAASSLSGGADTLEALGLRIDLGPDDVARCVAEVGIGFAFAPQFHPSYRHAGAVRREIGVPTVFNLLGPLTNPAKPRAGLIGCAWGDLAEVMAGVFATRGSSALVVHGDDGLDELTTTTTSTIWRVQAGTVERLTFDPAAFGFARAHVSELTGGDAEANAASAREVLGGATGPVRDAVLLNAAGAMVAHAGLSSDAKWVPAWESGLARAKEAIDSGAAEQLLARWVRFTQEL</sequence>
<name>TRPD_MYCGI</name>
<organism>
    <name type="scientific">Mycolicibacterium gilvum (strain PYR-GCK)</name>
    <name type="common">Mycobacterium gilvum (strain PYR-GCK)</name>
    <dbReference type="NCBI Taxonomy" id="350054"/>
    <lineage>
        <taxon>Bacteria</taxon>
        <taxon>Bacillati</taxon>
        <taxon>Actinomycetota</taxon>
        <taxon>Actinomycetes</taxon>
        <taxon>Mycobacteriales</taxon>
        <taxon>Mycobacteriaceae</taxon>
        <taxon>Mycolicibacterium</taxon>
    </lineage>
</organism>
<keyword id="KW-0028">Amino-acid biosynthesis</keyword>
<keyword id="KW-0057">Aromatic amino acid biosynthesis</keyword>
<keyword id="KW-0328">Glycosyltransferase</keyword>
<keyword id="KW-0460">Magnesium</keyword>
<keyword id="KW-0479">Metal-binding</keyword>
<keyword id="KW-0808">Transferase</keyword>
<keyword id="KW-0822">Tryptophan biosynthesis</keyword>
<comment type="function">
    <text evidence="1">Catalyzes the transfer of the phosphoribosyl group of 5-phosphorylribose-1-pyrophosphate (PRPP) to anthranilate to yield N-(5'-phosphoribosyl)-anthranilate (PRA).</text>
</comment>
<comment type="catalytic activity">
    <reaction evidence="1">
        <text>N-(5-phospho-beta-D-ribosyl)anthranilate + diphosphate = 5-phospho-alpha-D-ribose 1-diphosphate + anthranilate</text>
        <dbReference type="Rhea" id="RHEA:11768"/>
        <dbReference type="ChEBI" id="CHEBI:16567"/>
        <dbReference type="ChEBI" id="CHEBI:18277"/>
        <dbReference type="ChEBI" id="CHEBI:33019"/>
        <dbReference type="ChEBI" id="CHEBI:58017"/>
        <dbReference type="EC" id="2.4.2.18"/>
    </reaction>
</comment>
<comment type="cofactor">
    <cofactor evidence="1">
        <name>Mg(2+)</name>
        <dbReference type="ChEBI" id="CHEBI:18420"/>
    </cofactor>
    <text evidence="1">Binds 2 magnesium ions per monomer.</text>
</comment>
<comment type="pathway">
    <text evidence="1">Amino-acid biosynthesis; L-tryptophan biosynthesis; L-tryptophan from chorismate: step 2/5.</text>
</comment>
<comment type="subunit">
    <text evidence="1">Homodimer.</text>
</comment>
<comment type="similarity">
    <text evidence="1">Belongs to the anthranilate phosphoribosyltransferase family.</text>
</comment>
<reference key="1">
    <citation type="submission" date="2007-04" db="EMBL/GenBank/DDBJ databases">
        <title>Complete sequence of chromosome of Mycobacterium gilvum PYR-GCK.</title>
        <authorList>
            <consortium name="US DOE Joint Genome Institute"/>
            <person name="Copeland A."/>
            <person name="Lucas S."/>
            <person name="Lapidus A."/>
            <person name="Barry K."/>
            <person name="Detter J.C."/>
            <person name="Glavina del Rio T."/>
            <person name="Hammon N."/>
            <person name="Israni S."/>
            <person name="Dalin E."/>
            <person name="Tice H."/>
            <person name="Pitluck S."/>
            <person name="Chain P."/>
            <person name="Malfatti S."/>
            <person name="Shin M."/>
            <person name="Vergez L."/>
            <person name="Schmutz J."/>
            <person name="Larimer F."/>
            <person name="Land M."/>
            <person name="Hauser L."/>
            <person name="Kyrpides N."/>
            <person name="Mikhailova N."/>
            <person name="Miller C."/>
            <person name="Richardson P."/>
        </authorList>
    </citation>
    <scope>NUCLEOTIDE SEQUENCE [LARGE SCALE GENOMIC DNA]</scope>
    <source>
        <strain>PYR-GCK</strain>
    </source>
</reference>
<proteinExistence type="inferred from homology"/>
<dbReference type="EC" id="2.4.2.18" evidence="1"/>
<dbReference type="EMBL" id="CP000656">
    <property type="protein sequence ID" value="ABP45434.1"/>
    <property type="molecule type" value="Genomic_DNA"/>
</dbReference>
<dbReference type="SMR" id="A4TBH5"/>
<dbReference type="STRING" id="350054.Mflv_2957"/>
<dbReference type="KEGG" id="mgi:Mflv_2957"/>
<dbReference type="eggNOG" id="COG0547">
    <property type="taxonomic scope" value="Bacteria"/>
</dbReference>
<dbReference type="HOGENOM" id="CLU_034315_4_1_11"/>
<dbReference type="OrthoDB" id="9806430at2"/>
<dbReference type="UniPathway" id="UPA00035">
    <property type="reaction ID" value="UER00041"/>
</dbReference>
<dbReference type="GO" id="GO:0005829">
    <property type="term" value="C:cytosol"/>
    <property type="evidence" value="ECO:0007669"/>
    <property type="project" value="TreeGrafter"/>
</dbReference>
<dbReference type="GO" id="GO:0004048">
    <property type="term" value="F:anthranilate phosphoribosyltransferase activity"/>
    <property type="evidence" value="ECO:0007669"/>
    <property type="project" value="UniProtKB-UniRule"/>
</dbReference>
<dbReference type="GO" id="GO:0000287">
    <property type="term" value="F:magnesium ion binding"/>
    <property type="evidence" value="ECO:0007669"/>
    <property type="project" value="UniProtKB-UniRule"/>
</dbReference>
<dbReference type="GO" id="GO:0000162">
    <property type="term" value="P:L-tryptophan biosynthetic process"/>
    <property type="evidence" value="ECO:0007669"/>
    <property type="project" value="UniProtKB-UniRule"/>
</dbReference>
<dbReference type="FunFam" id="3.40.1030.10:FF:000002">
    <property type="entry name" value="Anthranilate phosphoribosyltransferase"/>
    <property type="match status" value="1"/>
</dbReference>
<dbReference type="Gene3D" id="3.40.1030.10">
    <property type="entry name" value="Nucleoside phosphorylase/phosphoribosyltransferase catalytic domain"/>
    <property type="match status" value="1"/>
</dbReference>
<dbReference type="Gene3D" id="1.20.970.10">
    <property type="entry name" value="Transferase, Pyrimidine Nucleoside Phosphorylase, Chain C"/>
    <property type="match status" value="1"/>
</dbReference>
<dbReference type="HAMAP" id="MF_00211">
    <property type="entry name" value="TrpD"/>
    <property type="match status" value="1"/>
</dbReference>
<dbReference type="InterPro" id="IPR005940">
    <property type="entry name" value="Anthranilate_Pribosyl_Tfrase"/>
</dbReference>
<dbReference type="InterPro" id="IPR000312">
    <property type="entry name" value="Glycosyl_Trfase_fam3"/>
</dbReference>
<dbReference type="InterPro" id="IPR017459">
    <property type="entry name" value="Glycosyl_Trfase_fam3_N_dom"/>
</dbReference>
<dbReference type="InterPro" id="IPR036320">
    <property type="entry name" value="Glycosyl_Trfase_fam3_N_dom_sf"/>
</dbReference>
<dbReference type="InterPro" id="IPR035902">
    <property type="entry name" value="Nuc_phospho_transferase"/>
</dbReference>
<dbReference type="NCBIfam" id="TIGR01245">
    <property type="entry name" value="trpD"/>
    <property type="match status" value="1"/>
</dbReference>
<dbReference type="PANTHER" id="PTHR43285">
    <property type="entry name" value="ANTHRANILATE PHOSPHORIBOSYLTRANSFERASE"/>
    <property type="match status" value="1"/>
</dbReference>
<dbReference type="PANTHER" id="PTHR43285:SF2">
    <property type="entry name" value="ANTHRANILATE PHOSPHORIBOSYLTRANSFERASE"/>
    <property type="match status" value="1"/>
</dbReference>
<dbReference type="Pfam" id="PF02885">
    <property type="entry name" value="Glycos_trans_3N"/>
    <property type="match status" value="1"/>
</dbReference>
<dbReference type="Pfam" id="PF00591">
    <property type="entry name" value="Glycos_transf_3"/>
    <property type="match status" value="1"/>
</dbReference>
<dbReference type="SUPFAM" id="SSF52418">
    <property type="entry name" value="Nucleoside phosphorylase/phosphoribosyltransferase catalytic domain"/>
    <property type="match status" value="1"/>
</dbReference>
<dbReference type="SUPFAM" id="SSF47648">
    <property type="entry name" value="Nucleoside phosphorylase/phosphoribosyltransferase N-terminal domain"/>
    <property type="match status" value="1"/>
</dbReference>